<accession>A7VN14</accession>
<keyword id="KW-0002">3D-structure</keyword>
<keyword id="KW-0903">Direct protein sequencing</keyword>
<keyword id="KW-1015">Disulfide bond</keyword>
<keyword id="KW-0964">Secreted</keyword>
<keyword id="KW-0732">Signal</keyword>
<dbReference type="EMBL" id="AB360907">
    <property type="protein sequence ID" value="BAF80052.1"/>
    <property type="molecule type" value="mRNA"/>
</dbReference>
<dbReference type="PDB" id="6IMF">
    <property type="method" value="X-ray"/>
    <property type="resolution" value="2.30 A"/>
    <property type="chains" value="B=1-109"/>
</dbReference>
<dbReference type="PDBsum" id="6IMF"/>
<dbReference type="SMR" id="A7VN14"/>
<dbReference type="GO" id="GO:0005576">
    <property type="term" value="C:extracellular region"/>
    <property type="evidence" value="ECO:0007669"/>
    <property type="project" value="UniProtKB-SubCell"/>
</dbReference>
<dbReference type="Gene3D" id="2.60.40.1900">
    <property type="entry name" value="Beta-microseminoprotein (PSP94) domain"/>
    <property type="match status" value="1"/>
</dbReference>
<dbReference type="InterPro" id="IPR008735">
    <property type="entry name" value="PSP94"/>
</dbReference>
<dbReference type="PANTHER" id="PTHR10500">
    <property type="entry name" value="BETA-MICROSEMINOPROTEIN"/>
    <property type="match status" value="1"/>
</dbReference>
<dbReference type="PANTHER" id="PTHR10500:SF7">
    <property type="entry name" value="BETA-MICROSEMINOPROTEIN"/>
    <property type="match status" value="1"/>
</dbReference>
<dbReference type="Pfam" id="PF05825">
    <property type="entry name" value="PSP94"/>
    <property type="match status" value="1"/>
</dbReference>
<feature type="signal peptide" evidence="2">
    <location>
        <begin position="1"/>
        <end position="19"/>
    </location>
</feature>
<feature type="chain" id="PRO_5000270321" description="Small serum protein 2">
    <location>
        <begin position="20"/>
        <end position="109"/>
    </location>
</feature>
<feature type="disulfide bond" evidence="1">
    <location>
        <begin position="21"/>
        <end position="72"/>
    </location>
</feature>
<feature type="disulfide bond" evidence="1">
    <location>
        <begin position="39"/>
        <end position="64"/>
    </location>
</feature>
<feature type="disulfide bond" evidence="1">
    <location>
        <begin position="59"/>
        <end position="93"/>
    </location>
</feature>
<feature type="disulfide bond" evidence="1">
    <location>
        <begin position="62"/>
        <end position="71"/>
    </location>
</feature>
<feature type="disulfide bond" evidence="1">
    <location>
        <begin position="84"/>
        <end position="107"/>
    </location>
</feature>
<feature type="strand" evidence="5">
    <location>
        <begin position="21"/>
        <end position="24"/>
    </location>
</feature>
<feature type="strand" evidence="5">
    <location>
        <begin position="52"/>
        <end position="55"/>
    </location>
</feature>
<feature type="strand" evidence="5">
    <location>
        <begin position="59"/>
        <end position="65"/>
    </location>
</feature>
<feature type="strand" evidence="5">
    <location>
        <begin position="68"/>
        <end position="73"/>
    </location>
</feature>
<feature type="strand" evidence="5">
    <location>
        <begin position="77"/>
        <end position="80"/>
    </location>
</feature>
<feature type="strand" evidence="5">
    <location>
        <begin position="84"/>
        <end position="89"/>
    </location>
</feature>
<feature type="turn" evidence="5">
    <location>
        <begin position="90"/>
        <end position="93"/>
    </location>
</feature>
<feature type="strand" evidence="5">
    <location>
        <begin position="94"/>
        <end position="101"/>
    </location>
</feature>
<comment type="function">
    <text>May serve as a self-defense protein against the toxic effects of the snake venom during accidental envenomation. Does not show inhibitory activity towards brevilysin H6.</text>
</comment>
<comment type="subunit">
    <text evidence="2 3">Forms a stable, non-covalent complex with serotriflin.</text>
</comment>
<comment type="subcellular location">
    <subcellularLocation>
        <location>Secreted</location>
    </subcellularLocation>
</comment>
<comment type="mass spectrometry" mass="9916.7" method="Unknown" evidence="2"/>
<comment type="similarity">
    <text evidence="4">Belongs to the beta-microseminoprotein family.</text>
</comment>
<sequence length="109" mass="12125">MRVFFSLIIFSFMLATCQGACGIGPLVSSPTDAMAPKKCVDPNDRRKHLIVSTWNTADCLRCECDNDGLSCCHRYGGLAERAGCKSVLNQVTCEYEFYRLDDLSKRCDA</sequence>
<evidence type="ECO:0000250" key="1"/>
<evidence type="ECO:0000269" key="2">
    <source>
    </source>
</evidence>
<evidence type="ECO:0000269" key="3">
    <source>
    </source>
</evidence>
<evidence type="ECO:0000305" key="4"/>
<evidence type="ECO:0007829" key="5">
    <source>
        <dbReference type="PDB" id="6IMF"/>
    </source>
</evidence>
<reference key="1">
    <citation type="journal article" date="2007" name="Biochem. Biophys. Res. Commun.">
        <title>Identification of novel serum proteins in a Japanese viper: homologs of mammalian PSP94.</title>
        <authorList>
            <person name="Aoki N."/>
            <person name="Sakiyama A."/>
            <person name="Deshimaru M."/>
            <person name="Terada S."/>
        </authorList>
    </citation>
    <scope>NUCLEOTIDE SEQUENCE [MRNA]</scope>
    <scope>PROTEIN SEQUENCE OF 20-69</scope>
    <scope>SUBUNIT WITH TRIFLIN</scope>
    <scope>MASS SPECTROMETRY</scope>
    <source>
        <tissue>Liver</tissue>
        <tissue>Serum</tissue>
    </source>
</reference>
<reference key="2">
    <citation type="journal article" date="2008" name="Biochim. Biophys. Acta">
        <title>Serotriflin, a CRISP family protein with binding affinity for small serum protein-2 in snake serum.</title>
        <authorList>
            <person name="Aoki N."/>
            <person name="Sakiyama A."/>
            <person name="Kuroki K."/>
            <person name="Maenaka K."/>
            <person name="Kohda D."/>
            <person name="Deshimaru M."/>
            <person name="Terada S."/>
        </authorList>
    </citation>
    <scope>SUBUNIT WITH SEROTRIFLIN</scope>
    <source>
        <tissue>Serum</tissue>
    </source>
</reference>
<organism>
    <name type="scientific">Protobothrops flavoviridis</name>
    <name type="common">Habu</name>
    <name type="synonym">Trimeresurus flavoviridis</name>
    <dbReference type="NCBI Taxonomy" id="88087"/>
    <lineage>
        <taxon>Eukaryota</taxon>
        <taxon>Metazoa</taxon>
        <taxon>Chordata</taxon>
        <taxon>Craniata</taxon>
        <taxon>Vertebrata</taxon>
        <taxon>Euteleostomi</taxon>
        <taxon>Lepidosauria</taxon>
        <taxon>Squamata</taxon>
        <taxon>Bifurcata</taxon>
        <taxon>Unidentata</taxon>
        <taxon>Episquamata</taxon>
        <taxon>Toxicofera</taxon>
        <taxon>Serpentes</taxon>
        <taxon>Colubroidea</taxon>
        <taxon>Viperidae</taxon>
        <taxon>Crotalinae</taxon>
        <taxon>Protobothrops</taxon>
    </lineage>
</organism>
<protein>
    <recommendedName>
        <fullName>Small serum protein 2</fullName>
        <shortName>SSP-2</shortName>
    </recommendedName>
</protein>
<name>MSMB2_PROFL</name>
<proteinExistence type="evidence at protein level"/>